<reference key="1">
    <citation type="journal article" date="2003" name="Proc. Natl. Acad. Sci. U.S.A.">
        <title>The complete genome sequence of the Arabidopsis and tomato pathogen Pseudomonas syringae pv. tomato DC3000.</title>
        <authorList>
            <person name="Buell C.R."/>
            <person name="Joardar V."/>
            <person name="Lindeberg M."/>
            <person name="Selengut J."/>
            <person name="Paulsen I.T."/>
            <person name="Gwinn M.L."/>
            <person name="Dodson R.J."/>
            <person name="DeBoy R.T."/>
            <person name="Durkin A.S."/>
            <person name="Kolonay J.F."/>
            <person name="Madupu R."/>
            <person name="Daugherty S.C."/>
            <person name="Brinkac L.M."/>
            <person name="Beanan M.J."/>
            <person name="Haft D.H."/>
            <person name="Nelson W.C."/>
            <person name="Davidsen T.M."/>
            <person name="Zafar N."/>
            <person name="Zhou L."/>
            <person name="Liu J."/>
            <person name="Yuan Q."/>
            <person name="Khouri H.M."/>
            <person name="Fedorova N.B."/>
            <person name="Tran B."/>
            <person name="Russell D."/>
            <person name="Berry K.J."/>
            <person name="Utterback T.R."/>
            <person name="Van Aken S.E."/>
            <person name="Feldblyum T.V."/>
            <person name="D'Ascenzo M."/>
            <person name="Deng W.-L."/>
            <person name="Ramos A.R."/>
            <person name="Alfano J.R."/>
            <person name="Cartinhour S."/>
            <person name="Chatterjee A.K."/>
            <person name="Delaney T.P."/>
            <person name="Lazarowitz S.G."/>
            <person name="Martin G.B."/>
            <person name="Schneider D.J."/>
            <person name="Tang X."/>
            <person name="Bender C.L."/>
            <person name="White O."/>
            <person name="Fraser C.M."/>
            <person name="Collmer A."/>
        </authorList>
    </citation>
    <scope>NUCLEOTIDE SEQUENCE [LARGE SCALE GENOMIC DNA]</scope>
    <source>
        <strain>ATCC BAA-871 / DC3000</strain>
    </source>
</reference>
<protein>
    <recommendedName>
        <fullName evidence="1">Large ribosomal subunit protein uL1</fullName>
    </recommendedName>
    <alternativeName>
        <fullName evidence="2">50S ribosomal protein L1</fullName>
    </alternativeName>
</protein>
<proteinExistence type="inferred from homology"/>
<name>RL1_PSESM</name>
<dbReference type="EMBL" id="AE016853">
    <property type="protein sequence ID" value="AAO54158.1"/>
    <property type="molecule type" value="Genomic_DNA"/>
</dbReference>
<dbReference type="RefSeq" id="NP_790463.1">
    <property type="nucleotide sequence ID" value="NC_004578.1"/>
</dbReference>
<dbReference type="RefSeq" id="WP_003317112.1">
    <property type="nucleotide sequence ID" value="NC_004578.1"/>
</dbReference>
<dbReference type="SMR" id="Q889Y1"/>
<dbReference type="STRING" id="223283.PSPTO_0616"/>
<dbReference type="GeneID" id="77280384"/>
<dbReference type="KEGG" id="pst:PSPTO_0616"/>
<dbReference type="PATRIC" id="fig|223283.9.peg.622"/>
<dbReference type="eggNOG" id="COG0081">
    <property type="taxonomic scope" value="Bacteria"/>
</dbReference>
<dbReference type="HOGENOM" id="CLU_062853_0_0_6"/>
<dbReference type="OrthoDB" id="9803740at2"/>
<dbReference type="PhylomeDB" id="Q889Y1"/>
<dbReference type="Proteomes" id="UP000002515">
    <property type="component" value="Chromosome"/>
</dbReference>
<dbReference type="GO" id="GO:0022625">
    <property type="term" value="C:cytosolic large ribosomal subunit"/>
    <property type="evidence" value="ECO:0007669"/>
    <property type="project" value="TreeGrafter"/>
</dbReference>
<dbReference type="GO" id="GO:0019843">
    <property type="term" value="F:rRNA binding"/>
    <property type="evidence" value="ECO:0007669"/>
    <property type="project" value="UniProtKB-UniRule"/>
</dbReference>
<dbReference type="GO" id="GO:0003735">
    <property type="term" value="F:structural constituent of ribosome"/>
    <property type="evidence" value="ECO:0007669"/>
    <property type="project" value="InterPro"/>
</dbReference>
<dbReference type="GO" id="GO:0000049">
    <property type="term" value="F:tRNA binding"/>
    <property type="evidence" value="ECO:0007669"/>
    <property type="project" value="UniProtKB-KW"/>
</dbReference>
<dbReference type="GO" id="GO:0006417">
    <property type="term" value="P:regulation of translation"/>
    <property type="evidence" value="ECO:0007669"/>
    <property type="project" value="UniProtKB-KW"/>
</dbReference>
<dbReference type="GO" id="GO:0006412">
    <property type="term" value="P:translation"/>
    <property type="evidence" value="ECO:0007669"/>
    <property type="project" value="UniProtKB-UniRule"/>
</dbReference>
<dbReference type="CDD" id="cd00403">
    <property type="entry name" value="Ribosomal_L1"/>
    <property type="match status" value="1"/>
</dbReference>
<dbReference type="FunFam" id="3.40.50.790:FF:000001">
    <property type="entry name" value="50S ribosomal protein L1"/>
    <property type="match status" value="1"/>
</dbReference>
<dbReference type="Gene3D" id="3.30.190.20">
    <property type="match status" value="1"/>
</dbReference>
<dbReference type="Gene3D" id="3.40.50.790">
    <property type="match status" value="1"/>
</dbReference>
<dbReference type="HAMAP" id="MF_01318_B">
    <property type="entry name" value="Ribosomal_uL1_B"/>
    <property type="match status" value="1"/>
</dbReference>
<dbReference type="InterPro" id="IPR005878">
    <property type="entry name" value="Ribosom_uL1_bac-type"/>
</dbReference>
<dbReference type="InterPro" id="IPR002143">
    <property type="entry name" value="Ribosomal_uL1"/>
</dbReference>
<dbReference type="InterPro" id="IPR023674">
    <property type="entry name" value="Ribosomal_uL1-like"/>
</dbReference>
<dbReference type="InterPro" id="IPR028364">
    <property type="entry name" value="Ribosomal_uL1/biogenesis"/>
</dbReference>
<dbReference type="InterPro" id="IPR016095">
    <property type="entry name" value="Ribosomal_uL1_3-a/b-sand"/>
</dbReference>
<dbReference type="InterPro" id="IPR023673">
    <property type="entry name" value="Ribosomal_uL1_CS"/>
</dbReference>
<dbReference type="NCBIfam" id="TIGR01169">
    <property type="entry name" value="rplA_bact"/>
    <property type="match status" value="1"/>
</dbReference>
<dbReference type="PANTHER" id="PTHR36427">
    <property type="entry name" value="54S RIBOSOMAL PROTEIN L1, MITOCHONDRIAL"/>
    <property type="match status" value="1"/>
</dbReference>
<dbReference type="PANTHER" id="PTHR36427:SF3">
    <property type="entry name" value="LARGE RIBOSOMAL SUBUNIT PROTEIN UL1M"/>
    <property type="match status" value="1"/>
</dbReference>
<dbReference type="Pfam" id="PF00687">
    <property type="entry name" value="Ribosomal_L1"/>
    <property type="match status" value="1"/>
</dbReference>
<dbReference type="PIRSF" id="PIRSF002155">
    <property type="entry name" value="Ribosomal_L1"/>
    <property type="match status" value="1"/>
</dbReference>
<dbReference type="SUPFAM" id="SSF56808">
    <property type="entry name" value="Ribosomal protein L1"/>
    <property type="match status" value="1"/>
</dbReference>
<dbReference type="PROSITE" id="PS01199">
    <property type="entry name" value="RIBOSOMAL_L1"/>
    <property type="match status" value="1"/>
</dbReference>
<gene>
    <name evidence="1" type="primary">rplA</name>
    <name type="ordered locus">PSPTO_0616</name>
</gene>
<comment type="function">
    <text evidence="1">Binds directly to 23S rRNA. The L1 stalk is quite mobile in the ribosome, and is involved in E site tRNA release.</text>
</comment>
<comment type="function">
    <text evidence="1">Protein L1 is also a translational repressor protein, it controls the translation of the L11 operon by binding to its mRNA.</text>
</comment>
<comment type="subunit">
    <text evidence="1">Part of the 50S ribosomal subunit.</text>
</comment>
<comment type="similarity">
    <text evidence="1">Belongs to the universal ribosomal protein uL1 family.</text>
</comment>
<feature type="chain" id="PRO_0000125716" description="Large ribosomal subunit protein uL1">
    <location>
        <begin position="1"/>
        <end position="231"/>
    </location>
</feature>
<accession>Q889Y1</accession>
<evidence type="ECO:0000255" key="1">
    <source>
        <dbReference type="HAMAP-Rule" id="MF_01318"/>
    </source>
</evidence>
<evidence type="ECO:0000305" key="2"/>
<organism>
    <name type="scientific">Pseudomonas syringae pv. tomato (strain ATCC BAA-871 / DC3000)</name>
    <dbReference type="NCBI Taxonomy" id="223283"/>
    <lineage>
        <taxon>Bacteria</taxon>
        <taxon>Pseudomonadati</taxon>
        <taxon>Pseudomonadota</taxon>
        <taxon>Gammaproteobacteria</taxon>
        <taxon>Pseudomonadales</taxon>
        <taxon>Pseudomonadaceae</taxon>
        <taxon>Pseudomonas</taxon>
    </lineage>
</organism>
<keyword id="KW-1185">Reference proteome</keyword>
<keyword id="KW-0678">Repressor</keyword>
<keyword id="KW-0687">Ribonucleoprotein</keyword>
<keyword id="KW-0689">Ribosomal protein</keyword>
<keyword id="KW-0694">RNA-binding</keyword>
<keyword id="KW-0699">rRNA-binding</keyword>
<keyword id="KW-0810">Translation regulation</keyword>
<keyword id="KW-0820">tRNA-binding</keyword>
<sequence>MAKLTKRQKAIAEKIEAGKSYNFVDAAALLTELSTVKFSESIDVAVNLGVDPRKSDQVVRSATVLPHGTGKTVRVAVFTQGPAAEAALAAGADRVGMDDLAAEMKAGDLNYDVVIASPDAMRVVGQLGQVLGPRGLMPNPKVGTVTPDVATAVKNAKAGQVRYRTDKNGIIHTSVGKVGFDAVKLKENVEALIADLKRIKPASSKGIYVKRITLSTTMGPGLVIDQGSLEA</sequence>